<comment type="function">
    <text evidence="1 5">Substrate recognition component of the SCF (SKP1-CUL1-F-box protein)-type E3 ubiquitin ligase complex, SCF(FBXO3), which mediates the ubiquitination and subsequent proteasomal degradation of target proteins (By similarity). Mediates the ubiquitination of HIPK2 and probably that of EP300, leading to rapid degradation by the proteasome (By similarity). In the presence of PML, HIPK2 ubiquitination still occurs, but degradation is prevented (By similarity). PML, HIPK2 and FBXO3 may act synergically to activate p53/TP53-dependent transactivation (By similarity). The SCF(FBXO3) also acts as a regulator of inflammation by mediating ubiquitination and degradation of FBXL2: specifically recognizes FBXL2 phosphorylated at 'Thr-404' and promotes its ubiquitination (PubMed:23542741).</text>
</comment>
<comment type="pathway">
    <text evidence="5">Protein modification; protein ubiquitination.</text>
</comment>
<comment type="subunit">
    <text evidence="1">Part of a SCF (SKP1-cullin-F-box) protein ligase complex SCF(FBXO3) consisting of FBXO3, SKP1, CUL1 and RBX1. Interacts with PML, interaction is direct and takes place either alone or within the SCF complex.</text>
</comment>
<comment type="subcellular location">
    <subcellularLocation>
        <location evidence="1">Nucleus</location>
    </subcellularLocation>
    <text evidence="1">Colocalizes with PML at the peripheries of nuclear bodies.</text>
</comment>
<comment type="alternative products">
    <event type="alternative splicing"/>
    <isoform>
        <id>Q9DC63-1</id>
        <name>1</name>
        <sequence type="displayed"/>
    </isoform>
    <isoform>
        <id>Q9DC63-2</id>
        <name>2</name>
        <sequence type="described" ref="VSP_039616 VSP_039617"/>
    </isoform>
    <isoform>
        <id>Q9DC63-3</id>
        <name>3</name>
        <sequence type="described" ref="VSP_039615 VSP_039616 VSP_039617"/>
    </isoform>
</comment>
<sequence length="480" mass="55227">MAAVEAETGLLTLESLPTDPLLLILSFVDYRDLINCCYVSRRLSQLSTHDPLWRRHCKKYWLISEEEKAGKSQCWRSLFIETYSDVGRYIDHYAAIKKAWRDLKKYLEPRCPRMVLSLKEGAREEDLDAVEAQIGCKLPDDYRCSYRIHNGQKLVVPGLLGSMALSNHYRSEDLLDVDTAAGGFQQRQGLKYCLPLTFCIHTGLSQYIAVEAAEGRNKNEVFYQCPDQMARNPAAIDMFIIGATFTDWFTSYVNNVVSGGFPIIRDQIFRYIHDPECVATTGDITVSVSTSFLPELSSVHPPHYFFTYRIRIEMSRDALPEKACQLDSRYWRITNAKGDVEEVQGPGVVGEFPIISPGRIYEYTSCTTFSTTSGYMEGYYTFHFLYFKDKVFNVAIPRFHMACPTFRVSIARLEMGPDEYEEMEEEAEEEEEEENDDSADMDESDESDADENESDEGEGEARRRRVFDVPIRRRRCSRLF</sequence>
<dbReference type="EMBL" id="AF233226">
    <property type="protein sequence ID" value="AAF67156.1"/>
    <property type="molecule type" value="mRNA"/>
</dbReference>
<dbReference type="EMBL" id="AK004544">
    <property type="protein sequence ID" value="BAB23360.1"/>
    <property type="molecule type" value="mRNA"/>
</dbReference>
<dbReference type="EMBL" id="AK019550">
    <property type="protein sequence ID" value="BAB31793.1"/>
    <property type="molecule type" value="mRNA"/>
</dbReference>
<dbReference type="EMBL" id="AK028048">
    <property type="protein sequence ID" value="BAC25719.1"/>
    <property type="molecule type" value="mRNA"/>
</dbReference>
<dbReference type="EMBL" id="AK031428">
    <property type="protein sequence ID" value="BAC27398.1"/>
    <property type="molecule type" value="mRNA"/>
</dbReference>
<dbReference type="EMBL" id="AK049870">
    <property type="protein sequence ID" value="BAC33965.1"/>
    <property type="molecule type" value="mRNA"/>
</dbReference>
<dbReference type="EMBL" id="AK050195">
    <property type="protein sequence ID" value="BAC34118.1"/>
    <property type="molecule type" value="mRNA"/>
</dbReference>
<dbReference type="EMBL" id="AK151130">
    <property type="protein sequence ID" value="BAE30138.1"/>
    <property type="molecule type" value="mRNA"/>
</dbReference>
<dbReference type="EMBL" id="AK151857">
    <property type="protein sequence ID" value="BAE30746.1"/>
    <property type="molecule type" value="mRNA"/>
</dbReference>
<dbReference type="EMBL" id="AK152780">
    <property type="protein sequence ID" value="BAE31491.1"/>
    <property type="molecule type" value="mRNA"/>
</dbReference>
<dbReference type="EMBL" id="AK167075">
    <property type="protein sequence ID" value="BAE39235.1"/>
    <property type="molecule type" value="mRNA"/>
</dbReference>
<dbReference type="EMBL" id="BX640578">
    <property type="status" value="NOT_ANNOTATED_CDS"/>
    <property type="molecule type" value="Genomic_DNA"/>
</dbReference>
<dbReference type="EMBL" id="CH466519">
    <property type="protein sequence ID" value="EDL27711.1"/>
    <property type="molecule type" value="Genomic_DNA"/>
</dbReference>
<dbReference type="EMBL" id="CH466519">
    <property type="protein sequence ID" value="EDL27712.1"/>
    <property type="molecule type" value="Genomic_DNA"/>
</dbReference>
<dbReference type="EMBL" id="BC010212">
    <property type="protein sequence ID" value="AAH10212.2"/>
    <property type="molecule type" value="mRNA"/>
</dbReference>
<dbReference type="EMBL" id="BC058253">
    <property type="protein sequence ID" value="AAH58253.1"/>
    <property type="molecule type" value="mRNA"/>
</dbReference>
<dbReference type="CCDS" id="CCDS16484.1">
    <molecule id="Q9DC63-1"/>
</dbReference>
<dbReference type="CCDS" id="CCDS16485.1">
    <molecule id="Q9DC63-2"/>
</dbReference>
<dbReference type="RefSeq" id="NP_065618.1">
    <molecule id="Q9DC63-2"/>
    <property type="nucleotide sequence ID" value="NM_020593.2"/>
</dbReference>
<dbReference type="RefSeq" id="NP_997598.1">
    <molecule id="Q9DC63-1"/>
    <property type="nucleotide sequence ID" value="NM_212433.1"/>
</dbReference>
<dbReference type="SMR" id="Q9DC63"/>
<dbReference type="BioGRID" id="208300">
    <property type="interactions" value="22"/>
</dbReference>
<dbReference type="FunCoup" id="Q9DC63">
    <property type="interactions" value="2204"/>
</dbReference>
<dbReference type="STRING" id="10090.ENSMUSP00000028603"/>
<dbReference type="iPTMnet" id="Q9DC63"/>
<dbReference type="PhosphoSitePlus" id="Q9DC63"/>
<dbReference type="SwissPalm" id="Q9DC63"/>
<dbReference type="PaxDb" id="10090-ENSMUSP00000028603"/>
<dbReference type="PeptideAtlas" id="Q9DC63"/>
<dbReference type="ProteomicsDB" id="267351">
    <molecule id="Q9DC63-1"/>
</dbReference>
<dbReference type="ProteomicsDB" id="267352">
    <molecule id="Q9DC63-2"/>
</dbReference>
<dbReference type="ProteomicsDB" id="267353">
    <molecule id="Q9DC63-3"/>
</dbReference>
<dbReference type="Pumba" id="Q9DC63"/>
<dbReference type="Antibodypedia" id="25751">
    <property type="antibodies" value="133 antibodies from 24 providers"/>
</dbReference>
<dbReference type="DNASU" id="57443"/>
<dbReference type="Ensembl" id="ENSMUST00000028603.10">
    <molecule id="Q9DC63-1"/>
    <property type="protein sequence ID" value="ENSMUSP00000028603.4"/>
    <property type="gene ID" value="ENSMUSG00000027180.13"/>
</dbReference>
<dbReference type="Ensembl" id="ENSMUST00000102565.4">
    <molecule id="Q9DC63-2"/>
    <property type="protein sequence ID" value="ENSMUSP00000099625.4"/>
    <property type="gene ID" value="ENSMUSG00000027180.13"/>
</dbReference>
<dbReference type="Ensembl" id="ENSMUST00000111135.8">
    <molecule id="Q9DC63-3"/>
    <property type="protein sequence ID" value="ENSMUSP00000106765.2"/>
    <property type="gene ID" value="ENSMUSG00000027180.13"/>
</dbReference>
<dbReference type="GeneID" id="57443"/>
<dbReference type="KEGG" id="mmu:57443"/>
<dbReference type="UCSC" id="uc008lji.1">
    <molecule id="Q9DC63-2"/>
    <property type="organism name" value="mouse"/>
</dbReference>
<dbReference type="UCSC" id="uc008ljk.1">
    <molecule id="Q9DC63-1"/>
    <property type="organism name" value="mouse"/>
</dbReference>
<dbReference type="AGR" id="MGI:1929084"/>
<dbReference type="CTD" id="26273"/>
<dbReference type="MGI" id="MGI:1929084">
    <property type="gene designation" value="Fbxo3"/>
</dbReference>
<dbReference type="VEuPathDB" id="HostDB:ENSMUSG00000027180"/>
<dbReference type="eggNOG" id="KOG4408">
    <property type="taxonomic scope" value="Eukaryota"/>
</dbReference>
<dbReference type="GeneTree" id="ENSGT00940000153571"/>
<dbReference type="InParanoid" id="Q9DC63"/>
<dbReference type="OMA" id="YVHDKDC"/>
<dbReference type="OrthoDB" id="2305498at2759"/>
<dbReference type="PhylomeDB" id="Q9DC63"/>
<dbReference type="TreeFam" id="TF329795"/>
<dbReference type="UniPathway" id="UPA00143"/>
<dbReference type="BioGRID-ORCS" id="57443">
    <property type="hits" value="8 hits in 78 CRISPR screens"/>
</dbReference>
<dbReference type="ChiTaRS" id="Fbxo3">
    <property type="organism name" value="mouse"/>
</dbReference>
<dbReference type="PRO" id="PR:Q9DC63"/>
<dbReference type="Proteomes" id="UP000000589">
    <property type="component" value="Chromosome 2"/>
</dbReference>
<dbReference type="RNAct" id="Q9DC63">
    <property type="molecule type" value="protein"/>
</dbReference>
<dbReference type="Bgee" id="ENSMUSG00000027180">
    <property type="expression patterns" value="Expressed in sternocleidomastoid and 259 other cell types or tissues"/>
</dbReference>
<dbReference type="ExpressionAtlas" id="Q9DC63">
    <property type="expression patterns" value="baseline and differential"/>
</dbReference>
<dbReference type="GO" id="GO:0005829">
    <property type="term" value="C:cytosol"/>
    <property type="evidence" value="ECO:0007669"/>
    <property type="project" value="Ensembl"/>
</dbReference>
<dbReference type="GO" id="GO:0005654">
    <property type="term" value="C:nucleoplasm"/>
    <property type="evidence" value="ECO:0007669"/>
    <property type="project" value="Ensembl"/>
</dbReference>
<dbReference type="GO" id="GO:0019005">
    <property type="term" value="C:SCF ubiquitin ligase complex"/>
    <property type="evidence" value="ECO:0000250"/>
    <property type="project" value="UniProtKB"/>
</dbReference>
<dbReference type="GO" id="GO:1990756">
    <property type="term" value="F:ubiquitin-like ligase-substrate adaptor activity"/>
    <property type="evidence" value="ECO:0000314"/>
    <property type="project" value="UniProtKB"/>
</dbReference>
<dbReference type="GO" id="GO:0016567">
    <property type="term" value="P:protein ubiquitination"/>
    <property type="evidence" value="ECO:0007669"/>
    <property type="project" value="UniProtKB-UniPathway"/>
</dbReference>
<dbReference type="GO" id="GO:0032496">
    <property type="term" value="P:response to lipopolysaccharide"/>
    <property type="evidence" value="ECO:0000250"/>
    <property type="project" value="UniProtKB"/>
</dbReference>
<dbReference type="GO" id="GO:0031146">
    <property type="term" value="P:SCF-dependent proteasomal ubiquitin-dependent protein catabolic process"/>
    <property type="evidence" value="ECO:0000314"/>
    <property type="project" value="UniProtKB"/>
</dbReference>
<dbReference type="CDD" id="cd22084">
    <property type="entry name" value="F-box_FBXO3"/>
    <property type="match status" value="1"/>
</dbReference>
<dbReference type="FunFam" id="2.60.40.1470:FF:000002">
    <property type="entry name" value="F-box only protein 3"/>
    <property type="match status" value="1"/>
</dbReference>
<dbReference type="Gene3D" id="1.20.1280.50">
    <property type="match status" value="1"/>
</dbReference>
<dbReference type="Gene3D" id="2.60.40.1470">
    <property type="entry name" value="ApaG domain"/>
    <property type="match status" value="1"/>
</dbReference>
<dbReference type="Gene3D" id="3.40.1580.10">
    <property type="entry name" value="SMI1/KNR4-like"/>
    <property type="match status" value="1"/>
</dbReference>
<dbReference type="InterPro" id="IPR007474">
    <property type="entry name" value="ApaG_domain"/>
</dbReference>
<dbReference type="InterPro" id="IPR036767">
    <property type="entry name" value="ApaG_sf"/>
</dbReference>
<dbReference type="InterPro" id="IPR036047">
    <property type="entry name" value="F-box-like_dom_sf"/>
</dbReference>
<dbReference type="InterPro" id="IPR001810">
    <property type="entry name" value="F-box_dom"/>
</dbReference>
<dbReference type="InterPro" id="IPR052121">
    <property type="entry name" value="F-box_SCF_Substrate_Recog"/>
</dbReference>
<dbReference type="InterPro" id="IPR018958">
    <property type="entry name" value="Knr4/Smi1-like_dom"/>
</dbReference>
<dbReference type="InterPro" id="IPR037883">
    <property type="entry name" value="Knr4/Smi1-like_sf"/>
</dbReference>
<dbReference type="NCBIfam" id="NF003967">
    <property type="entry name" value="PRK05461.1"/>
    <property type="match status" value="1"/>
</dbReference>
<dbReference type="PANTHER" id="PTHR46550">
    <property type="entry name" value="F-BOX ONLY PROTEIN 3"/>
    <property type="match status" value="1"/>
</dbReference>
<dbReference type="PANTHER" id="PTHR46550:SF6">
    <property type="entry name" value="F-BOX ONLY PROTEIN 3"/>
    <property type="match status" value="1"/>
</dbReference>
<dbReference type="Pfam" id="PF04379">
    <property type="entry name" value="DUF525"/>
    <property type="match status" value="1"/>
</dbReference>
<dbReference type="Pfam" id="PF12937">
    <property type="entry name" value="F-box-like"/>
    <property type="match status" value="1"/>
</dbReference>
<dbReference type="Pfam" id="PF09346">
    <property type="entry name" value="SMI1_KNR4"/>
    <property type="match status" value="1"/>
</dbReference>
<dbReference type="SMART" id="SM00256">
    <property type="entry name" value="FBOX"/>
    <property type="match status" value="1"/>
</dbReference>
<dbReference type="SMART" id="SM00860">
    <property type="entry name" value="SMI1_KNR4"/>
    <property type="match status" value="1"/>
</dbReference>
<dbReference type="SUPFAM" id="SSF110069">
    <property type="entry name" value="ApaG-like"/>
    <property type="match status" value="1"/>
</dbReference>
<dbReference type="SUPFAM" id="SSF81383">
    <property type="entry name" value="F-box domain"/>
    <property type="match status" value="1"/>
</dbReference>
<dbReference type="SUPFAM" id="SSF160631">
    <property type="entry name" value="SMI1/KNR4-like"/>
    <property type="match status" value="1"/>
</dbReference>
<dbReference type="PROSITE" id="PS51087">
    <property type="entry name" value="APAG"/>
    <property type="match status" value="1"/>
</dbReference>
<dbReference type="PROSITE" id="PS50181">
    <property type="entry name" value="FBOX"/>
    <property type="match status" value="1"/>
</dbReference>
<protein>
    <recommendedName>
        <fullName>F-box only protein 3</fullName>
    </recommendedName>
</protein>
<proteinExistence type="evidence at protein level"/>
<feature type="chain" id="PRO_0000119878" description="F-box only protein 3">
    <location>
        <begin position="1"/>
        <end position="480"/>
    </location>
</feature>
<feature type="domain" description="F-box" evidence="2">
    <location>
        <begin position="10"/>
        <end position="56"/>
    </location>
</feature>
<feature type="domain" description="ApaG" evidence="3">
    <location>
        <begin position="278"/>
        <end position="408"/>
    </location>
</feature>
<feature type="region of interest" description="Disordered" evidence="4">
    <location>
        <begin position="419"/>
        <end position="463"/>
    </location>
</feature>
<feature type="compositionally biased region" description="Acidic residues" evidence="4">
    <location>
        <begin position="419"/>
        <end position="458"/>
    </location>
</feature>
<feature type="splice variant" id="VSP_039615" description="In isoform 3." evidence="7">
    <location>
        <begin position="36"/>
        <end position="40"/>
    </location>
</feature>
<feature type="splice variant" id="VSP_039616" description="In isoform 2 and isoform 3." evidence="6">
    <original>EM</original>
    <variation>VS</variation>
    <location>
        <begin position="414"/>
        <end position="415"/>
    </location>
</feature>
<feature type="splice variant" id="VSP_039617" description="In isoform 2 and isoform 3." evidence="6">
    <location>
        <begin position="416"/>
        <end position="480"/>
    </location>
</feature>
<feature type="sequence conflict" description="In Ref. 2; BAB31793." evidence="7" ref="2">
    <original>I</original>
    <variation>M</variation>
    <location>
        <position position="63"/>
    </location>
</feature>
<feature type="sequence conflict" description="In Ref. 2; BAC34118." evidence="7" ref="2">
    <original>V</original>
    <variation>M</variation>
    <location>
        <position position="86"/>
    </location>
</feature>
<feature type="sequence conflict" description="In Ref. 2; BAC25719." evidence="7" ref="2">
    <original>E</original>
    <variation>V</variation>
    <location>
        <position position="214"/>
    </location>
</feature>
<feature type="sequence conflict" description="In Ref. 2; BAB31793." evidence="7" ref="2">
    <original>Q</original>
    <variation>K</variation>
    <location>
        <position position="228"/>
    </location>
</feature>
<feature type="sequence conflict" description="In Ref. 2; BAE30746/BAE30138." evidence="7" ref="2">
    <original>P</original>
    <variation>H</variation>
    <location>
        <position position="262"/>
    </location>
</feature>
<feature type="sequence conflict" description="In Ref. 2; BAE30746/BAE30138." evidence="7" ref="2">
    <original>E</original>
    <variation>A</variation>
    <location>
        <position position="458"/>
    </location>
</feature>
<organism>
    <name type="scientific">Mus musculus</name>
    <name type="common">Mouse</name>
    <dbReference type="NCBI Taxonomy" id="10090"/>
    <lineage>
        <taxon>Eukaryota</taxon>
        <taxon>Metazoa</taxon>
        <taxon>Chordata</taxon>
        <taxon>Craniata</taxon>
        <taxon>Vertebrata</taxon>
        <taxon>Euteleostomi</taxon>
        <taxon>Mammalia</taxon>
        <taxon>Eutheria</taxon>
        <taxon>Euarchontoglires</taxon>
        <taxon>Glires</taxon>
        <taxon>Rodentia</taxon>
        <taxon>Myomorpha</taxon>
        <taxon>Muroidea</taxon>
        <taxon>Muridae</taxon>
        <taxon>Murinae</taxon>
        <taxon>Mus</taxon>
        <taxon>Mus</taxon>
    </lineage>
</organism>
<reference key="1">
    <citation type="journal article" date="2000" name="Genomics">
        <title>cDNA cloning and expression analysis of new members of the mammalian F-box protein family.</title>
        <authorList>
            <person name="Ilyin G.P."/>
            <person name="Rialland M."/>
            <person name="Pigeon C."/>
            <person name="Guguen-Guillouzo C."/>
        </authorList>
    </citation>
    <scope>NUCLEOTIDE SEQUENCE [MRNA] (ISOFORM 2)</scope>
    <source>
        <tissue>Liver</tissue>
    </source>
</reference>
<reference key="2">
    <citation type="journal article" date="2005" name="Science">
        <title>The transcriptional landscape of the mammalian genome.</title>
        <authorList>
            <person name="Carninci P."/>
            <person name="Kasukawa T."/>
            <person name="Katayama S."/>
            <person name="Gough J."/>
            <person name="Frith M.C."/>
            <person name="Maeda N."/>
            <person name="Oyama R."/>
            <person name="Ravasi T."/>
            <person name="Lenhard B."/>
            <person name="Wells C."/>
            <person name="Kodzius R."/>
            <person name="Shimokawa K."/>
            <person name="Bajic V.B."/>
            <person name="Brenner S.E."/>
            <person name="Batalov S."/>
            <person name="Forrest A.R."/>
            <person name="Zavolan M."/>
            <person name="Davis M.J."/>
            <person name="Wilming L.G."/>
            <person name="Aidinis V."/>
            <person name="Allen J.E."/>
            <person name="Ambesi-Impiombato A."/>
            <person name="Apweiler R."/>
            <person name="Aturaliya R.N."/>
            <person name="Bailey T.L."/>
            <person name="Bansal M."/>
            <person name="Baxter L."/>
            <person name="Beisel K.W."/>
            <person name="Bersano T."/>
            <person name="Bono H."/>
            <person name="Chalk A.M."/>
            <person name="Chiu K.P."/>
            <person name="Choudhary V."/>
            <person name="Christoffels A."/>
            <person name="Clutterbuck D.R."/>
            <person name="Crowe M.L."/>
            <person name="Dalla E."/>
            <person name="Dalrymple B.P."/>
            <person name="de Bono B."/>
            <person name="Della Gatta G."/>
            <person name="di Bernardo D."/>
            <person name="Down T."/>
            <person name="Engstrom P."/>
            <person name="Fagiolini M."/>
            <person name="Faulkner G."/>
            <person name="Fletcher C.F."/>
            <person name="Fukushima T."/>
            <person name="Furuno M."/>
            <person name="Futaki S."/>
            <person name="Gariboldi M."/>
            <person name="Georgii-Hemming P."/>
            <person name="Gingeras T.R."/>
            <person name="Gojobori T."/>
            <person name="Green R.E."/>
            <person name="Gustincich S."/>
            <person name="Harbers M."/>
            <person name="Hayashi Y."/>
            <person name="Hensch T.K."/>
            <person name="Hirokawa N."/>
            <person name="Hill D."/>
            <person name="Huminiecki L."/>
            <person name="Iacono M."/>
            <person name="Ikeo K."/>
            <person name="Iwama A."/>
            <person name="Ishikawa T."/>
            <person name="Jakt M."/>
            <person name="Kanapin A."/>
            <person name="Katoh M."/>
            <person name="Kawasawa Y."/>
            <person name="Kelso J."/>
            <person name="Kitamura H."/>
            <person name="Kitano H."/>
            <person name="Kollias G."/>
            <person name="Krishnan S.P."/>
            <person name="Kruger A."/>
            <person name="Kummerfeld S.K."/>
            <person name="Kurochkin I.V."/>
            <person name="Lareau L.F."/>
            <person name="Lazarevic D."/>
            <person name="Lipovich L."/>
            <person name="Liu J."/>
            <person name="Liuni S."/>
            <person name="McWilliam S."/>
            <person name="Madan Babu M."/>
            <person name="Madera M."/>
            <person name="Marchionni L."/>
            <person name="Matsuda H."/>
            <person name="Matsuzawa S."/>
            <person name="Miki H."/>
            <person name="Mignone F."/>
            <person name="Miyake S."/>
            <person name="Morris K."/>
            <person name="Mottagui-Tabar S."/>
            <person name="Mulder N."/>
            <person name="Nakano N."/>
            <person name="Nakauchi H."/>
            <person name="Ng P."/>
            <person name="Nilsson R."/>
            <person name="Nishiguchi S."/>
            <person name="Nishikawa S."/>
            <person name="Nori F."/>
            <person name="Ohara O."/>
            <person name="Okazaki Y."/>
            <person name="Orlando V."/>
            <person name="Pang K.C."/>
            <person name="Pavan W.J."/>
            <person name="Pavesi G."/>
            <person name="Pesole G."/>
            <person name="Petrovsky N."/>
            <person name="Piazza S."/>
            <person name="Reed J."/>
            <person name="Reid J.F."/>
            <person name="Ring B.Z."/>
            <person name="Ringwald M."/>
            <person name="Rost B."/>
            <person name="Ruan Y."/>
            <person name="Salzberg S.L."/>
            <person name="Sandelin A."/>
            <person name="Schneider C."/>
            <person name="Schoenbach C."/>
            <person name="Sekiguchi K."/>
            <person name="Semple C.A."/>
            <person name="Seno S."/>
            <person name="Sessa L."/>
            <person name="Sheng Y."/>
            <person name="Shibata Y."/>
            <person name="Shimada H."/>
            <person name="Shimada K."/>
            <person name="Silva D."/>
            <person name="Sinclair B."/>
            <person name="Sperling S."/>
            <person name="Stupka E."/>
            <person name="Sugiura K."/>
            <person name="Sultana R."/>
            <person name="Takenaka Y."/>
            <person name="Taki K."/>
            <person name="Tammoja K."/>
            <person name="Tan S.L."/>
            <person name="Tang S."/>
            <person name="Taylor M.S."/>
            <person name="Tegner J."/>
            <person name="Teichmann S.A."/>
            <person name="Ueda H.R."/>
            <person name="van Nimwegen E."/>
            <person name="Verardo R."/>
            <person name="Wei C.L."/>
            <person name="Yagi K."/>
            <person name="Yamanishi H."/>
            <person name="Zabarovsky E."/>
            <person name="Zhu S."/>
            <person name="Zimmer A."/>
            <person name="Hide W."/>
            <person name="Bult C."/>
            <person name="Grimmond S.M."/>
            <person name="Teasdale R.D."/>
            <person name="Liu E.T."/>
            <person name="Brusic V."/>
            <person name="Quackenbush J."/>
            <person name="Wahlestedt C."/>
            <person name="Mattick J.S."/>
            <person name="Hume D.A."/>
            <person name="Kai C."/>
            <person name="Sasaki D."/>
            <person name="Tomaru Y."/>
            <person name="Fukuda S."/>
            <person name="Kanamori-Katayama M."/>
            <person name="Suzuki M."/>
            <person name="Aoki J."/>
            <person name="Arakawa T."/>
            <person name="Iida J."/>
            <person name="Imamura K."/>
            <person name="Itoh M."/>
            <person name="Kato T."/>
            <person name="Kawaji H."/>
            <person name="Kawagashira N."/>
            <person name="Kawashima T."/>
            <person name="Kojima M."/>
            <person name="Kondo S."/>
            <person name="Konno H."/>
            <person name="Nakano K."/>
            <person name="Ninomiya N."/>
            <person name="Nishio T."/>
            <person name="Okada M."/>
            <person name="Plessy C."/>
            <person name="Shibata K."/>
            <person name="Shiraki T."/>
            <person name="Suzuki S."/>
            <person name="Tagami M."/>
            <person name="Waki K."/>
            <person name="Watahiki A."/>
            <person name="Okamura-Oho Y."/>
            <person name="Suzuki H."/>
            <person name="Kawai J."/>
            <person name="Hayashizaki Y."/>
        </authorList>
    </citation>
    <scope>NUCLEOTIDE SEQUENCE [LARGE SCALE MRNA] (ISOFORM 1)</scope>
    <source>
        <strain>C57BL/6J</strain>
        <tissue>Bone marrow</tissue>
        <tissue>Hippocampus</tissue>
        <tissue>Liver</tissue>
        <tissue>Lung</tissue>
        <tissue>Testis</tissue>
    </source>
</reference>
<reference key="3">
    <citation type="journal article" date="2009" name="PLoS Biol.">
        <title>Lineage-specific biology revealed by a finished genome assembly of the mouse.</title>
        <authorList>
            <person name="Church D.M."/>
            <person name="Goodstadt L."/>
            <person name="Hillier L.W."/>
            <person name="Zody M.C."/>
            <person name="Goldstein S."/>
            <person name="She X."/>
            <person name="Bult C.J."/>
            <person name="Agarwala R."/>
            <person name="Cherry J.L."/>
            <person name="DiCuccio M."/>
            <person name="Hlavina W."/>
            <person name="Kapustin Y."/>
            <person name="Meric P."/>
            <person name="Maglott D."/>
            <person name="Birtle Z."/>
            <person name="Marques A.C."/>
            <person name="Graves T."/>
            <person name="Zhou S."/>
            <person name="Teague B."/>
            <person name="Potamousis K."/>
            <person name="Churas C."/>
            <person name="Place M."/>
            <person name="Herschleb J."/>
            <person name="Runnheim R."/>
            <person name="Forrest D."/>
            <person name="Amos-Landgraf J."/>
            <person name="Schwartz D.C."/>
            <person name="Cheng Z."/>
            <person name="Lindblad-Toh K."/>
            <person name="Eichler E.E."/>
            <person name="Ponting C.P."/>
        </authorList>
    </citation>
    <scope>NUCLEOTIDE SEQUENCE [LARGE SCALE GENOMIC DNA]</scope>
    <source>
        <strain>C57BL/6J</strain>
    </source>
</reference>
<reference key="4">
    <citation type="submission" date="2005-07" db="EMBL/GenBank/DDBJ databases">
        <authorList>
            <person name="Mural R.J."/>
            <person name="Adams M.D."/>
            <person name="Myers E.W."/>
            <person name="Smith H.O."/>
            <person name="Venter J.C."/>
        </authorList>
    </citation>
    <scope>NUCLEOTIDE SEQUENCE [LARGE SCALE GENOMIC DNA]</scope>
</reference>
<reference key="5">
    <citation type="journal article" date="2004" name="Genome Res.">
        <title>The status, quality, and expansion of the NIH full-length cDNA project: the Mammalian Gene Collection (MGC).</title>
        <authorList>
            <consortium name="The MGC Project Team"/>
        </authorList>
    </citation>
    <scope>NUCLEOTIDE SEQUENCE [LARGE SCALE MRNA] (ISOFORM 1)</scope>
    <source>
        <tissue>Eye</tissue>
        <tissue>Mammary tumor</tissue>
    </source>
</reference>
<reference key="6">
    <citation type="journal article" date="2010" name="Cell">
        <title>A tissue-specific atlas of mouse protein phosphorylation and expression.</title>
        <authorList>
            <person name="Huttlin E.L."/>
            <person name="Jedrychowski M.P."/>
            <person name="Elias J.E."/>
            <person name="Goswami T."/>
            <person name="Rad R."/>
            <person name="Beausoleil S.A."/>
            <person name="Villen J."/>
            <person name="Haas W."/>
            <person name="Sowa M.E."/>
            <person name="Gygi S.P."/>
        </authorList>
    </citation>
    <scope>IDENTIFICATION BY MASS SPECTROMETRY [LARGE SCALE ANALYSIS]</scope>
    <source>
        <tissue>Spleen</tissue>
        <tissue>Testis</tissue>
    </source>
</reference>
<reference key="7">
    <citation type="journal article" date="2013" name="Nat. Immunol.">
        <title>A combinatorial F box protein directed pathway controls TRAF adaptor stability to regulate inflammation.</title>
        <authorList>
            <person name="Chen B.B."/>
            <person name="Coon T.A."/>
            <person name="Glasser J.R."/>
            <person name="McVerry B.J."/>
            <person name="Zhao J."/>
            <person name="Zhao Y."/>
            <person name="Zou C."/>
            <person name="Ellis B."/>
            <person name="Sciurba F.C."/>
            <person name="Zhang Y."/>
            <person name="Mallampalli R.K."/>
        </authorList>
    </citation>
    <scope>FUNCTION</scope>
    <scope>PATHWAY</scope>
</reference>
<accession>Q9DC63</accession>
<accession>A2BHN5</accession>
<accession>A2BHN7</accession>
<accession>Q3TKB0</accession>
<accession>Q3U9C1</accession>
<accession>Q8C7I0</accession>
<accession>Q8CEJ0</accession>
<accession>Q91VI9</accession>
<accession>Q9D2J5</accession>
<accession>Q9JIE4</accession>
<evidence type="ECO:0000250" key="1">
    <source>
        <dbReference type="UniProtKB" id="Q9UK99"/>
    </source>
</evidence>
<evidence type="ECO:0000255" key="2">
    <source>
        <dbReference type="PROSITE-ProRule" id="PRU00080"/>
    </source>
</evidence>
<evidence type="ECO:0000255" key="3">
    <source>
        <dbReference type="PROSITE-ProRule" id="PRU00412"/>
    </source>
</evidence>
<evidence type="ECO:0000256" key="4">
    <source>
        <dbReference type="SAM" id="MobiDB-lite"/>
    </source>
</evidence>
<evidence type="ECO:0000269" key="5">
    <source>
    </source>
</evidence>
<evidence type="ECO:0000303" key="6">
    <source>
    </source>
</evidence>
<evidence type="ECO:0000305" key="7"/>
<gene>
    <name type="primary">Fbxo3</name>
    <name type="synonym">Fba</name>
    <name type="synonym">Fbx3</name>
</gene>
<name>FBX3_MOUSE</name>
<keyword id="KW-0025">Alternative splicing</keyword>
<keyword id="KW-0539">Nucleus</keyword>
<keyword id="KW-1185">Reference proteome</keyword>
<keyword id="KW-0833">Ubl conjugation pathway</keyword>